<proteinExistence type="inferred from homology"/>
<accession>Q87QL9</accession>
<reference key="1">
    <citation type="journal article" date="2003" name="Lancet">
        <title>Genome sequence of Vibrio parahaemolyticus: a pathogenic mechanism distinct from that of V. cholerae.</title>
        <authorList>
            <person name="Makino K."/>
            <person name="Oshima K."/>
            <person name="Kurokawa K."/>
            <person name="Yokoyama K."/>
            <person name="Uda T."/>
            <person name="Tagomori K."/>
            <person name="Iijima Y."/>
            <person name="Najima M."/>
            <person name="Nakano M."/>
            <person name="Yamashita A."/>
            <person name="Kubota Y."/>
            <person name="Kimura S."/>
            <person name="Yasunaga T."/>
            <person name="Honda T."/>
            <person name="Shinagawa H."/>
            <person name="Hattori M."/>
            <person name="Iida T."/>
        </authorList>
    </citation>
    <scope>NUCLEOTIDE SEQUENCE [LARGE SCALE GENOMIC DNA]</scope>
    <source>
        <strain>RIMD 2210633</strain>
    </source>
</reference>
<evidence type="ECO:0000255" key="1">
    <source>
        <dbReference type="HAMAP-Rule" id="MF_00144"/>
    </source>
</evidence>
<evidence type="ECO:0000305" key="2"/>
<gene>
    <name evidence="1" type="primary">mnmA</name>
    <name type="synonym">trmU</name>
    <name type="ordered locus">VP1130</name>
</gene>
<name>MNMA_VIBPA</name>
<comment type="function">
    <text evidence="1">Catalyzes the 2-thiolation of uridine at the wobble position (U34) of tRNA, leading to the formation of s(2)U34.</text>
</comment>
<comment type="catalytic activity">
    <reaction evidence="1">
        <text>S-sulfanyl-L-cysteinyl-[protein] + uridine(34) in tRNA + AH2 + ATP = 2-thiouridine(34) in tRNA + L-cysteinyl-[protein] + A + AMP + diphosphate + H(+)</text>
        <dbReference type="Rhea" id="RHEA:47032"/>
        <dbReference type="Rhea" id="RHEA-COMP:10131"/>
        <dbReference type="Rhea" id="RHEA-COMP:11726"/>
        <dbReference type="Rhea" id="RHEA-COMP:11727"/>
        <dbReference type="Rhea" id="RHEA-COMP:11728"/>
        <dbReference type="ChEBI" id="CHEBI:13193"/>
        <dbReference type="ChEBI" id="CHEBI:15378"/>
        <dbReference type="ChEBI" id="CHEBI:17499"/>
        <dbReference type="ChEBI" id="CHEBI:29950"/>
        <dbReference type="ChEBI" id="CHEBI:30616"/>
        <dbReference type="ChEBI" id="CHEBI:33019"/>
        <dbReference type="ChEBI" id="CHEBI:61963"/>
        <dbReference type="ChEBI" id="CHEBI:65315"/>
        <dbReference type="ChEBI" id="CHEBI:87170"/>
        <dbReference type="ChEBI" id="CHEBI:456215"/>
        <dbReference type="EC" id="2.8.1.13"/>
    </reaction>
</comment>
<comment type="subcellular location">
    <subcellularLocation>
        <location evidence="1">Cytoplasm</location>
    </subcellularLocation>
</comment>
<comment type="similarity">
    <text evidence="1">Belongs to the MnmA/TRMU family.</text>
</comment>
<comment type="sequence caution" evidence="2">
    <conflict type="erroneous initiation">
        <sequence resource="EMBL-CDS" id="BAC59393"/>
    </conflict>
</comment>
<dbReference type="EC" id="2.8.1.13" evidence="1"/>
<dbReference type="EMBL" id="BA000031">
    <property type="protein sequence ID" value="BAC59393.1"/>
    <property type="status" value="ALT_INIT"/>
    <property type="molecule type" value="Genomic_DNA"/>
</dbReference>
<dbReference type="RefSeq" id="NP_797509.2">
    <property type="nucleotide sequence ID" value="NC_004603.1"/>
</dbReference>
<dbReference type="RefSeq" id="WP_005459992.1">
    <property type="nucleotide sequence ID" value="NC_004603.1"/>
</dbReference>
<dbReference type="SMR" id="Q87QL9"/>
<dbReference type="GeneID" id="1188635"/>
<dbReference type="KEGG" id="vpa:VP1130"/>
<dbReference type="PATRIC" id="fig|223926.6.peg.1071"/>
<dbReference type="eggNOG" id="COG0482">
    <property type="taxonomic scope" value="Bacteria"/>
</dbReference>
<dbReference type="HOGENOM" id="CLU_035188_1_0_6"/>
<dbReference type="Proteomes" id="UP000002493">
    <property type="component" value="Chromosome 1"/>
</dbReference>
<dbReference type="GO" id="GO:0005737">
    <property type="term" value="C:cytoplasm"/>
    <property type="evidence" value="ECO:0007669"/>
    <property type="project" value="UniProtKB-SubCell"/>
</dbReference>
<dbReference type="GO" id="GO:0005524">
    <property type="term" value="F:ATP binding"/>
    <property type="evidence" value="ECO:0007669"/>
    <property type="project" value="UniProtKB-KW"/>
</dbReference>
<dbReference type="GO" id="GO:0000049">
    <property type="term" value="F:tRNA binding"/>
    <property type="evidence" value="ECO:0007669"/>
    <property type="project" value="UniProtKB-KW"/>
</dbReference>
<dbReference type="GO" id="GO:0103016">
    <property type="term" value="F:tRNA-uridine 2-sulfurtransferase activity"/>
    <property type="evidence" value="ECO:0007669"/>
    <property type="project" value="UniProtKB-EC"/>
</dbReference>
<dbReference type="GO" id="GO:0002143">
    <property type="term" value="P:tRNA wobble position uridine thiolation"/>
    <property type="evidence" value="ECO:0007669"/>
    <property type="project" value="TreeGrafter"/>
</dbReference>
<dbReference type="CDD" id="cd01998">
    <property type="entry name" value="MnmA_TRMU-like"/>
    <property type="match status" value="1"/>
</dbReference>
<dbReference type="FunFam" id="2.30.30.280:FF:000001">
    <property type="entry name" value="tRNA-specific 2-thiouridylase MnmA"/>
    <property type="match status" value="1"/>
</dbReference>
<dbReference type="FunFam" id="2.40.30.10:FF:000023">
    <property type="entry name" value="tRNA-specific 2-thiouridylase MnmA"/>
    <property type="match status" value="1"/>
</dbReference>
<dbReference type="FunFam" id="3.40.50.620:FF:000004">
    <property type="entry name" value="tRNA-specific 2-thiouridylase MnmA"/>
    <property type="match status" value="1"/>
</dbReference>
<dbReference type="Gene3D" id="2.30.30.280">
    <property type="entry name" value="Adenine nucleotide alpha hydrolases-like domains"/>
    <property type="match status" value="1"/>
</dbReference>
<dbReference type="Gene3D" id="3.40.50.620">
    <property type="entry name" value="HUPs"/>
    <property type="match status" value="1"/>
</dbReference>
<dbReference type="Gene3D" id="2.40.30.10">
    <property type="entry name" value="Translation factors"/>
    <property type="match status" value="1"/>
</dbReference>
<dbReference type="HAMAP" id="MF_00144">
    <property type="entry name" value="tRNA_thiouridyl_MnmA"/>
    <property type="match status" value="1"/>
</dbReference>
<dbReference type="InterPro" id="IPR004506">
    <property type="entry name" value="MnmA-like"/>
</dbReference>
<dbReference type="InterPro" id="IPR046885">
    <property type="entry name" value="MnmA-like_C"/>
</dbReference>
<dbReference type="InterPro" id="IPR046884">
    <property type="entry name" value="MnmA-like_central"/>
</dbReference>
<dbReference type="InterPro" id="IPR023382">
    <property type="entry name" value="MnmA-like_central_sf"/>
</dbReference>
<dbReference type="InterPro" id="IPR014729">
    <property type="entry name" value="Rossmann-like_a/b/a_fold"/>
</dbReference>
<dbReference type="NCBIfam" id="NF001138">
    <property type="entry name" value="PRK00143.1"/>
    <property type="match status" value="1"/>
</dbReference>
<dbReference type="NCBIfam" id="TIGR00420">
    <property type="entry name" value="trmU"/>
    <property type="match status" value="1"/>
</dbReference>
<dbReference type="PANTHER" id="PTHR11933:SF5">
    <property type="entry name" value="MITOCHONDRIAL TRNA-SPECIFIC 2-THIOURIDYLASE 1"/>
    <property type="match status" value="1"/>
</dbReference>
<dbReference type="PANTHER" id="PTHR11933">
    <property type="entry name" value="TRNA 5-METHYLAMINOMETHYL-2-THIOURIDYLATE -METHYLTRANSFERASE"/>
    <property type="match status" value="1"/>
</dbReference>
<dbReference type="Pfam" id="PF03054">
    <property type="entry name" value="tRNA_Me_trans"/>
    <property type="match status" value="1"/>
</dbReference>
<dbReference type="Pfam" id="PF20258">
    <property type="entry name" value="tRNA_Me_trans_C"/>
    <property type="match status" value="1"/>
</dbReference>
<dbReference type="Pfam" id="PF20259">
    <property type="entry name" value="tRNA_Me_trans_M"/>
    <property type="match status" value="1"/>
</dbReference>
<dbReference type="SUPFAM" id="SSF52402">
    <property type="entry name" value="Adenine nucleotide alpha hydrolases-like"/>
    <property type="match status" value="1"/>
</dbReference>
<protein>
    <recommendedName>
        <fullName evidence="1">tRNA-specific 2-thiouridylase MnmA</fullName>
        <ecNumber evidence="1">2.8.1.13</ecNumber>
    </recommendedName>
</protein>
<feature type="chain" id="PRO_0000121699" description="tRNA-specific 2-thiouridylase MnmA">
    <location>
        <begin position="1"/>
        <end position="374"/>
    </location>
</feature>
<feature type="region of interest" description="Interaction with target base in tRNA" evidence="1">
    <location>
        <begin position="98"/>
        <end position="100"/>
    </location>
</feature>
<feature type="region of interest" description="Interaction with tRNA" evidence="1">
    <location>
        <begin position="152"/>
        <end position="154"/>
    </location>
</feature>
<feature type="region of interest" description="Interaction with tRNA" evidence="1">
    <location>
        <begin position="316"/>
        <end position="317"/>
    </location>
</feature>
<feature type="active site" description="Nucleophile" evidence="1">
    <location>
        <position position="103"/>
    </location>
</feature>
<feature type="active site" description="Cysteine persulfide intermediate" evidence="1">
    <location>
        <position position="202"/>
    </location>
</feature>
<feature type="binding site" evidence="1">
    <location>
        <begin position="12"/>
        <end position="19"/>
    </location>
    <ligand>
        <name>ATP</name>
        <dbReference type="ChEBI" id="CHEBI:30616"/>
    </ligand>
</feature>
<feature type="binding site" evidence="1">
    <location>
        <position position="38"/>
    </location>
    <ligand>
        <name>ATP</name>
        <dbReference type="ChEBI" id="CHEBI:30616"/>
    </ligand>
</feature>
<feature type="binding site" evidence="1">
    <location>
        <position position="128"/>
    </location>
    <ligand>
        <name>ATP</name>
        <dbReference type="ChEBI" id="CHEBI:30616"/>
    </ligand>
</feature>
<feature type="site" description="Interaction with tRNA" evidence="1">
    <location>
        <position position="129"/>
    </location>
</feature>
<feature type="site" description="Interaction with tRNA" evidence="1">
    <location>
        <position position="349"/>
    </location>
</feature>
<feature type="disulfide bond" description="Alternate" evidence="1">
    <location>
        <begin position="103"/>
        <end position="202"/>
    </location>
</feature>
<keyword id="KW-0067">ATP-binding</keyword>
<keyword id="KW-0963">Cytoplasm</keyword>
<keyword id="KW-1015">Disulfide bond</keyword>
<keyword id="KW-0547">Nucleotide-binding</keyword>
<keyword id="KW-0694">RNA-binding</keyword>
<keyword id="KW-0808">Transferase</keyword>
<keyword id="KW-0819">tRNA processing</keyword>
<keyword id="KW-0820">tRNA-binding</keyword>
<organism>
    <name type="scientific">Vibrio parahaemolyticus serotype O3:K6 (strain RIMD 2210633)</name>
    <dbReference type="NCBI Taxonomy" id="223926"/>
    <lineage>
        <taxon>Bacteria</taxon>
        <taxon>Pseudomonadati</taxon>
        <taxon>Pseudomonadota</taxon>
        <taxon>Gammaproteobacteria</taxon>
        <taxon>Vibrionales</taxon>
        <taxon>Vibrionaceae</taxon>
        <taxon>Vibrio</taxon>
    </lineage>
</organism>
<sequence>MSDNSQKKVIVGMSGGVDSSVSAYLLKQQGYQVEGLFMKNWEEDDNEEYCTAAEDLADAQAVCDKLGIHLHTINFAAEYWDNVFEYFLAEYKAGRTPNPDILCNKEIKFKAFLEFADEVLEADYIAMGHYVRRSFPENGEKPQMLRGLDSNKDQSYFLYTLSHEQVARSLFPVGDLEKPEVRRIAEEQGLITAKKKDSTGICFIGERKFTEFLGRYLPAQPGNIETPEGEVIGQHQGLMYHTLGQRKGLHIGGRKGGGGNEDPWFVGEKDLDRNVLIAVQGKDHPMLKSEGLLASQLHWVDREPIRDVMKCTVKTRYRQQDIPCTIIPIDDENIKVIFDEPQIAVTPGQSAVFYKDDVCLGGGIIEQRIKYSQA</sequence>